<comment type="function">
    <text evidence="1">One of the primary rRNA binding proteins. Required for association of the 30S and 50S subunits to form the 70S ribosome, for tRNA binding and peptide bond formation. It has been suggested to have peptidyltransferase activity; this is somewhat controversial. Makes several contacts with the 16S rRNA in the 70S ribosome.</text>
</comment>
<comment type="subunit">
    <text evidence="1">Part of the 50S ribosomal subunit. Forms a bridge to the 30S subunit in the 70S ribosome.</text>
</comment>
<comment type="similarity">
    <text evidence="1">Belongs to the universal ribosomal protein uL2 family.</text>
</comment>
<organism>
    <name type="scientific">Synechococcus elongatus (strain ATCC 33912 / PCC 7942 / FACHB-805)</name>
    <name type="common">Anacystis nidulans R2</name>
    <dbReference type="NCBI Taxonomy" id="1140"/>
    <lineage>
        <taxon>Bacteria</taxon>
        <taxon>Bacillati</taxon>
        <taxon>Cyanobacteriota</taxon>
        <taxon>Cyanophyceae</taxon>
        <taxon>Synechococcales</taxon>
        <taxon>Synechococcaceae</taxon>
        <taxon>Synechococcus</taxon>
    </lineage>
</organism>
<feature type="chain" id="PRO_0000237256" description="Large ribosomal subunit protein uL2">
    <location>
        <begin position="1"/>
        <end position="287"/>
    </location>
</feature>
<feature type="region of interest" description="Disordered" evidence="2">
    <location>
        <begin position="214"/>
        <end position="287"/>
    </location>
</feature>
<feature type="compositionally biased region" description="Basic residues" evidence="2">
    <location>
        <begin position="271"/>
        <end position="287"/>
    </location>
</feature>
<accession>Q31L10</accession>
<reference key="1">
    <citation type="submission" date="2005-08" db="EMBL/GenBank/DDBJ databases">
        <title>Complete sequence of chromosome 1 of Synechococcus elongatus PCC 7942.</title>
        <authorList>
            <consortium name="US DOE Joint Genome Institute"/>
            <person name="Copeland A."/>
            <person name="Lucas S."/>
            <person name="Lapidus A."/>
            <person name="Barry K."/>
            <person name="Detter J.C."/>
            <person name="Glavina T."/>
            <person name="Hammon N."/>
            <person name="Israni S."/>
            <person name="Pitluck S."/>
            <person name="Schmutz J."/>
            <person name="Larimer F."/>
            <person name="Land M."/>
            <person name="Kyrpides N."/>
            <person name="Lykidis A."/>
            <person name="Golden S."/>
            <person name="Richardson P."/>
        </authorList>
    </citation>
    <scope>NUCLEOTIDE SEQUENCE [LARGE SCALE GENOMIC DNA]</scope>
    <source>
        <strain>ATCC 33912 / PCC 7942 / FACHB-805</strain>
    </source>
</reference>
<evidence type="ECO:0000255" key="1">
    <source>
        <dbReference type="HAMAP-Rule" id="MF_01320"/>
    </source>
</evidence>
<evidence type="ECO:0000256" key="2">
    <source>
        <dbReference type="SAM" id="MobiDB-lite"/>
    </source>
</evidence>
<evidence type="ECO:0000305" key="3"/>
<name>RL2_SYNE7</name>
<gene>
    <name evidence="1" type="primary">rplB</name>
    <name evidence="1" type="synonym">rpl2</name>
    <name type="ordered locus">Synpcc7942_2229</name>
</gene>
<dbReference type="EMBL" id="CP000100">
    <property type="protein sequence ID" value="ABB58259.1"/>
    <property type="molecule type" value="Genomic_DNA"/>
</dbReference>
<dbReference type="RefSeq" id="WP_011378366.1">
    <property type="nucleotide sequence ID" value="NZ_JACJTX010000001.1"/>
</dbReference>
<dbReference type="SMR" id="Q31L10"/>
<dbReference type="STRING" id="1140.Synpcc7942_2229"/>
<dbReference type="PaxDb" id="1140-Synpcc7942_2229"/>
<dbReference type="GeneID" id="72431112"/>
<dbReference type="KEGG" id="syf:Synpcc7942_2229"/>
<dbReference type="eggNOG" id="COG0090">
    <property type="taxonomic scope" value="Bacteria"/>
</dbReference>
<dbReference type="HOGENOM" id="CLU_036235_2_1_3"/>
<dbReference type="OrthoDB" id="9778722at2"/>
<dbReference type="BioCyc" id="SYNEL:SYNPCC7942_2229-MONOMER"/>
<dbReference type="Proteomes" id="UP000889800">
    <property type="component" value="Chromosome"/>
</dbReference>
<dbReference type="GO" id="GO:0015934">
    <property type="term" value="C:large ribosomal subunit"/>
    <property type="evidence" value="ECO:0007669"/>
    <property type="project" value="InterPro"/>
</dbReference>
<dbReference type="GO" id="GO:0019843">
    <property type="term" value="F:rRNA binding"/>
    <property type="evidence" value="ECO:0007669"/>
    <property type="project" value="UniProtKB-UniRule"/>
</dbReference>
<dbReference type="GO" id="GO:0003735">
    <property type="term" value="F:structural constituent of ribosome"/>
    <property type="evidence" value="ECO:0007669"/>
    <property type="project" value="InterPro"/>
</dbReference>
<dbReference type="GO" id="GO:0016740">
    <property type="term" value="F:transferase activity"/>
    <property type="evidence" value="ECO:0007669"/>
    <property type="project" value="InterPro"/>
</dbReference>
<dbReference type="GO" id="GO:0006412">
    <property type="term" value="P:translation"/>
    <property type="evidence" value="ECO:0007669"/>
    <property type="project" value="UniProtKB-UniRule"/>
</dbReference>
<dbReference type="FunFam" id="2.30.30.30:FF:000001">
    <property type="entry name" value="50S ribosomal protein L2"/>
    <property type="match status" value="1"/>
</dbReference>
<dbReference type="FunFam" id="2.40.50.140:FF:000003">
    <property type="entry name" value="50S ribosomal protein L2"/>
    <property type="match status" value="1"/>
</dbReference>
<dbReference type="FunFam" id="4.10.950.10:FF:000001">
    <property type="entry name" value="50S ribosomal protein L2"/>
    <property type="match status" value="1"/>
</dbReference>
<dbReference type="Gene3D" id="2.30.30.30">
    <property type="match status" value="1"/>
</dbReference>
<dbReference type="Gene3D" id="2.40.50.140">
    <property type="entry name" value="Nucleic acid-binding proteins"/>
    <property type="match status" value="1"/>
</dbReference>
<dbReference type="Gene3D" id="4.10.950.10">
    <property type="entry name" value="Ribosomal protein L2, domain 3"/>
    <property type="match status" value="1"/>
</dbReference>
<dbReference type="HAMAP" id="MF_01320_B">
    <property type="entry name" value="Ribosomal_uL2_B"/>
    <property type="match status" value="1"/>
</dbReference>
<dbReference type="InterPro" id="IPR012340">
    <property type="entry name" value="NA-bd_OB-fold"/>
</dbReference>
<dbReference type="InterPro" id="IPR014722">
    <property type="entry name" value="Rib_uL2_dom2"/>
</dbReference>
<dbReference type="InterPro" id="IPR002171">
    <property type="entry name" value="Ribosomal_uL2"/>
</dbReference>
<dbReference type="InterPro" id="IPR005880">
    <property type="entry name" value="Ribosomal_uL2_bac/org-type"/>
</dbReference>
<dbReference type="InterPro" id="IPR022669">
    <property type="entry name" value="Ribosomal_uL2_C"/>
</dbReference>
<dbReference type="InterPro" id="IPR022671">
    <property type="entry name" value="Ribosomal_uL2_CS"/>
</dbReference>
<dbReference type="InterPro" id="IPR014726">
    <property type="entry name" value="Ribosomal_uL2_dom3"/>
</dbReference>
<dbReference type="InterPro" id="IPR022666">
    <property type="entry name" value="Ribosomal_uL2_RNA-bd_dom"/>
</dbReference>
<dbReference type="InterPro" id="IPR008991">
    <property type="entry name" value="Translation_prot_SH3-like_sf"/>
</dbReference>
<dbReference type="NCBIfam" id="TIGR01171">
    <property type="entry name" value="rplB_bact"/>
    <property type="match status" value="1"/>
</dbReference>
<dbReference type="PANTHER" id="PTHR13691:SF5">
    <property type="entry name" value="LARGE RIBOSOMAL SUBUNIT PROTEIN UL2M"/>
    <property type="match status" value="1"/>
</dbReference>
<dbReference type="PANTHER" id="PTHR13691">
    <property type="entry name" value="RIBOSOMAL PROTEIN L2"/>
    <property type="match status" value="1"/>
</dbReference>
<dbReference type="Pfam" id="PF00181">
    <property type="entry name" value="Ribosomal_L2"/>
    <property type="match status" value="1"/>
</dbReference>
<dbReference type="Pfam" id="PF03947">
    <property type="entry name" value="Ribosomal_L2_C"/>
    <property type="match status" value="1"/>
</dbReference>
<dbReference type="PIRSF" id="PIRSF002158">
    <property type="entry name" value="Ribosomal_L2"/>
    <property type="match status" value="1"/>
</dbReference>
<dbReference type="SMART" id="SM01383">
    <property type="entry name" value="Ribosomal_L2"/>
    <property type="match status" value="1"/>
</dbReference>
<dbReference type="SMART" id="SM01382">
    <property type="entry name" value="Ribosomal_L2_C"/>
    <property type="match status" value="1"/>
</dbReference>
<dbReference type="SUPFAM" id="SSF50249">
    <property type="entry name" value="Nucleic acid-binding proteins"/>
    <property type="match status" value="1"/>
</dbReference>
<dbReference type="SUPFAM" id="SSF50104">
    <property type="entry name" value="Translation proteins SH3-like domain"/>
    <property type="match status" value="1"/>
</dbReference>
<dbReference type="PROSITE" id="PS00467">
    <property type="entry name" value="RIBOSOMAL_L2"/>
    <property type="match status" value="1"/>
</dbReference>
<protein>
    <recommendedName>
        <fullName evidence="1">Large ribosomal subunit protein uL2</fullName>
    </recommendedName>
    <alternativeName>
        <fullName evidence="3">50S ribosomal protein L2</fullName>
    </alternativeName>
</protein>
<keyword id="KW-1185">Reference proteome</keyword>
<keyword id="KW-0687">Ribonucleoprotein</keyword>
<keyword id="KW-0689">Ribosomal protein</keyword>
<keyword id="KW-0694">RNA-binding</keyword>
<keyword id="KW-0699">rRNA-binding</keyword>
<sequence length="287" mass="31706">MGIRAFRPYTPGTRERVVSDYAEITRNEPEKSLLVSKHRRKGRNNRGVITCRHRGGGHKRLYRIIDFKRDKRNVPGKIVSIEYDPNRNARISLVYYEDGEKRYILTPAGVHVGTPIIAGDETPIEVGNAMPLQNIPLGTTVHNVELVAGKGGQIVRAAGASAQVVAKEGNYVALKLPSTEVRLVRKECYATIGAVGNAEVRNTSLGKAGRKRWLGRRPEVRGSVMNPVDHPHGGGEGRAPIGRSGPVTPWGKPALGRKTRKKNKQSDRLIQRRRRKSSKRGRGGRDA</sequence>
<proteinExistence type="inferred from homology"/>